<reference key="1">
    <citation type="journal article" date="2003" name="Proc. Natl. Acad. Sci. U.S.A.">
        <title>Complete genome sequence of the Q-fever pathogen, Coxiella burnetii.</title>
        <authorList>
            <person name="Seshadri R."/>
            <person name="Paulsen I.T."/>
            <person name="Eisen J.A."/>
            <person name="Read T.D."/>
            <person name="Nelson K.E."/>
            <person name="Nelson W.C."/>
            <person name="Ward N.L."/>
            <person name="Tettelin H."/>
            <person name="Davidsen T.M."/>
            <person name="Beanan M.J."/>
            <person name="DeBoy R.T."/>
            <person name="Daugherty S.C."/>
            <person name="Brinkac L.M."/>
            <person name="Madupu R."/>
            <person name="Dodson R.J."/>
            <person name="Khouri H.M."/>
            <person name="Lee K.H."/>
            <person name="Carty H.A."/>
            <person name="Scanlan D."/>
            <person name="Heinzen R.A."/>
            <person name="Thompson H.A."/>
            <person name="Samuel J.E."/>
            <person name="Fraser C.M."/>
            <person name="Heidelberg J.F."/>
        </authorList>
    </citation>
    <scope>NUCLEOTIDE SEQUENCE [LARGE SCALE GENOMIC DNA]</scope>
    <source>
        <strain>RSA 493 / Nine Mile phase I</strain>
    </source>
</reference>
<name>NUSB_COXBU</name>
<proteinExistence type="inferred from homology"/>
<gene>
    <name evidence="1" type="primary">nusB</name>
    <name type="ordered locus">CBU_1417</name>
</gene>
<protein>
    <recommendedName>
        <fullName evidence="1">Transcription antitermination protein NusB</fullName>
    </recommendedName>
    <alternativeName>
        <fullName evidence="1">Antitermination factor NusB</fullName>
    </alternativeName>
</protein>
<comment type="function">
    <text evidence="1">Involved in transcription antitermination. Required for transcription of ribosomal RNA (rRNA) genes. Binds specifically to the boxA antiterminator sequence of the ribosomal RNA (rrn) operons.</text>
</comment>
<comment type="similarity">
    <text evidence="1">Belongs to the NusB family.</text>
</comment>
<organism>
    <name type="scientific">Coxiella burnetii (strain RSA 493 / Nine Mile phase I)</name>
    <dbReference type="NCBI Taxonomy" id="227377"/>
    <lineage>
        <taxon>Bacteria</taxon>
        <taxon>Pseudomonadati</taxon>
        <taxon>Pseudomonadota</taxon>
        <taxon>Gammaproteobacteria</taxon>
        <taxon>Legionellales</taxon>
        <taxon>Coxiellaceae</taxon>
        <taxon>Coxiella</taxon>
    </lineage>
</organism>
<dbReference type="EMBL" id="AE016828">
    <property type="protein sequence ID" value="AAO90915.1"/>
    <property type="molecule type" value="Genomic_DNA"/>
</dbReference>
<dbReference type="RefSeq" id="NP_820401.1">
    <property type="nucleotide sequence ID" value="NC_002971.4"/>
</dbReference>
<dbReference type="RefSeq" id="WP_010958215.1">
    <property type="nucleotide sequence ID" value="NZ_CCYB01000027.1"/>
</dbReference>
<dbReference type="SMR" id="Q83BT5"/>
<dbReference type="STRING" id="227377.CBU_1417"/>
<dbReference type="EnsemblBacteria" id="AAO90915">
    <property type="protein sequence ID" value="AAO90915"/>
    <property type="gene ID" value="CBU_1417"/>
</dbReference>
<dbReference type="GeneID" id="1209323"/>
<dbReference type="KEGG" id="cbu:CBU_1417"/>
<dbReference type="PATRIC" id="fig|227377.7.peg.1417"/>
<dbReference type="eggNOG" id="COG0781">
    <property type="taxonomic scope" value="Bacteria"/>
</dbReference>
<dbReference type="HOGENOM" id="CLU_087843_4_1_6"/>
<dbReference type="OrthoDB" id="9789556at2"/>
<dbReference type="Proteomes" id="UP000002671">
    <property type="component" value="Chromosome"/>
</dbReference>
<dbReference type="GO" id="GO:0005829">
    <property type="term" value="C:cytosol"/>
    <property type="evidence" value="ECO:0000318"/>
    <property type="project" value="GO_Central"/>
</dbReference>
<dbReference type="GO" id="GO:0003723">
    <property type="term" value="F:RNA binding"/>
    <property type="evidence" value="ECO:0007669"/>
    <property type="project" value="UniProtKB-UniRule"/>
</dbReference>
<dbReference type="GO" id="GO:0006353">
    <property type="term" value="P:DNA-templated transcription termination"/>
    <property type="evidence" value="ECO:0007669"/>
    <property type="project" value="UniProtKB-UniRule"/>
</dbReference>
<dbReference type="GO" id="GO:0031564">
    <property type="term" value="P:transcription antitermination"/>
    <property type="evidence" value="ECO:0007669"/>
    <property type="project" value="UniProtKB-KW"/>
</dbReference>
<dbReference type="FunFam" id="1.10.940.10:FF:000001">
    <property type="entry name" value="Transcription antitermination factor NusB"/>
    <property type="match status" value="1"/>
</dbReference>
<dbReference type="Gene3D" id="1.10.940.10">
    <property type="entry name" value="NusB-like"/>
    <property type="match status" value="1"/>
</dbReference>
<dbReference type="HAMAP" id="MF_00073">
    <property type="entry name" value="NusB"/>
    <property type="match status" value="1"/>
</dbReference>
<dbReference type="InterPro" id="IPR035926">
    <property type="entry name" value="NusB-like_sf"/>
</dbReference>
<dbReference type="InterPro" id="IPR011605">
    <property type="entry name" value="NusB_fam"/>
</dbReference>
<dbReference type="InterPro" id="IPR006027">
    <property type="entry name" value="NusB_RsmB_TIM44"/>
</dbReference>
<dbReference type="NCBIfam" id="TIGR01951">
    <property type="entry name" value="nusB"/>
    <property type="match status" value="1"/>
</dbReference>
<dbReference type="PANTHER" id="PTHR11078:SF3">
    <property type="entry name" value="ANTITERMINATION NUSB DOMAIN-CONTAINING PROTEIN"/>
    <property type="match status" value="1"/>
</dbReference>
<dbReference type="PANTHER" id="PTHR11078">
    <property type="entry name" value="N UTILIZATION SUBSTANCE PROTEIN B-RELATED"/>
    <property type="match status" value="1"/>
</dbReference>
<dbReference type="Pfam" id="PF01029">
    <property type="entry name" value="NusB"/>
    <property type="match status" value="1"/>
</dbReference>
<dbReference type="SUPFAM" id="SSF48013">
    <property type="entry name" value="NusB-like"/>
    <property type="match status" value="1"/>
</dbReference>
<keyword id="KW-1185">Reference proteome</keyword>
<keyword id="KW-0694">RNA-binding</keyword>
<keyword id="KW-0804">Transcription</keyword>
<keyword id="KW-0889">Transcription antitermination</keyword>
<keyword id="KW-0805">Transcription regulation</keyword>
<feature type="chain" id="PRO_0000176534" description="Transcription antitermination protein NusB">
    <location>
        <begin position="1"/>
        <end position="138"/>
    </location>
</feature>
<evidence type="ECO:0000255" key="1">
    <source>
        <dbReference type="HAMAP-Rule" id="MF_00073"/>
    </source>
</evidence>
<accession>Q83BT5</accession>
<sequence>MINKTRHNARRYALQALYQWFFCETKPDALISQFMEEHDLSDTDVAYFKEVVTGTIQHVAIIDELMTAHLDRKISALNPVELSVLRLSIYELLHRKEVPYKVVIDEALELVKEFGAEAGHKYVNAILDVLSSEIRKGV</sequence>